<protein>
    <recommendedName>
        <fullName>Uncharacterized protein E111R</fullName>
        <shortName>pE111R</shortName>
    </recommendedName>
</protein>
<reference key="1">
    <citation type="submission" date="2003-03" db="EMBL/GenBank/DDBJ databases">
        <title>African swine fever virus genomes.</title>
        <authorList>
            <person name="Kutish G.F."/>
            <person name="Rock D.L."/>
        </authorList>
    </citation>
    <scope>NUCLEOTIDE SEQUENCE [LARGE SCALE GENOMIC DNA]</scope>
</reference>
<feature type="chain" id="PRO_0000373479" description="Uncharacterized protein E111R">
    <location>
        <begin position="1"/>
        <end position="111"/>
    </location>
</feature>
<comment type="similarity">
    <text evidence="1">Belongs to the asfivirus E111R family.</text>
</comment>
<organismHost>
    <name type="scientific">Ornithodoros</name>
    <name type="common">relapsing fever ticks</name>
    <dbReference type="NCBI Taxonomy" id="6937"/>
</organismHost>
<organismHost>
    <name type="scientific">Phacochoerus aethiopicus</name>
    <name type="common">Warthog</name>
    <dbReference type="NCBI Taxonomy" id="85517"/>
</organismHost>
<organismHost>
    <name type="scientific">Phacochoerus africanus</name>
    <name type="common">Warthog</name>
    <dbReference type="NCBI Taxonomy" id="41426"/>
</organismHost>
<organismHost>
    <name type="scientific">Potamochoerus larvatus</name>
    <name type="common">Bushpig</name>
    <dbReference type="NCBI Taxonomy" id="273792"/>
</organismHost>
<organismHost>
    <name type="scientific">Sus scrofa</name>
    <name type="common">Pig</name>
    <dbReference type="NCBI Taxonomy" id="9823"/>
</organismHost>
<dbReference type="EMBL" id="AY261366">
    <property type="status" value="NOT_ANNOTATED_CDS"/>
    <property type="molecule type" value="Genomic_DNA"/>
</dbReference>
<dbReference type="SMR" id="P0CA18"/>
<dbReference type="Proteomes" id="UP000000858">
    <property type="component" value="Segment"/>
</dbReference>
<organism>
    <name type="scientific">African swine fever virus (isolate Warthog/Namibia/Wart80/1980)</name>
    <name type="common">ASFV</name>
    <dbReference type="NCBI Taxonomy" id="561444"/>
    <lineage>
        <taxon>Viruses</taxon>
        <taxon>Varidnaviria</taxon>
        <taxon>Bamfordvirae</taxon>
        <taxon>Nucleocytoviricota</taxon>
        <taxon>Pokkesviricetes</taxon>
        <taxon>Asfuvirales</taxon>
        <taxon>Asfarviridae</taxon>
        <taxon>Asfivirus</taxon>
        <taxon>African swine fever virus</taxon>
    </lineage>
</organism>
<evidence type="ECO:0000305" key="1"/>
<proteinExistence type="inferred from homology"/>
<name>VF111_ASFWA</name>
<accession>P0CA18</accession>
<sequence length="111" mass="12919">MSFSECPLVISACKKFLQKRITIENEALINALITALAQTSTLNDLCLLPIQTYLLSYKNAFEWIHFVCIAITTILDSKYNWKDCTVDINYIFLHVTYIYNIKTKEYLDYCS</sequence>
<gene>
    <name type="ordered locus">War-145</name>
</gene>